<gene>
    <name type="primary">ECM14</name>
    <name type="ORF">PADG_05315</name>
</gene>
<reference key="1">
    <citation type="journal article" date="2011" name="PLoS Genet.">
        <title>Comparative genomic analysis of human fungal pathogens causing paracoccidioidomycosis.</title>
        <authorList>
            <person name="Desjardins C.A."/>
            <person name="Champion M.D."/>
            <person name="Holder J.W."/>
            <person name="Muszewska A."/>
            <person name="Goldberg J."/>
            <person name="Bailao A.M."/>
            <person name="Brigido M.M."/>
            <person name="Ferreira M.E."/>
            <person name="Garcia A.M."/>
            <person name="Grynberg M."/>
            <person name="Gujja S."/>
            <person name="Heiman D.I."/>
            <person name="Henn M.R."/>
            <person name="Kodira C.D."/>
            <person name="Leon-Narvaez H."/>
            <person name="Longo L.V.G."/>
            <person name="Ma L.-J."/>
            <person name="Malavazi I."/>
            <person name="Matsuo A.L."/>
            <person name="Morais F.V."/>
            <person name="Pereira M."/>
            <person name="Rodriguez-Brito S."/>
            <person name="Sakthikumar S."/>
            <person name="Salem-Izacc S.M."/>
            <person name="Sykes S.M."/>
            <person name="Teixeira M.M."/>
            <person name="Vallejo M.C."/>
            <person name="Walter M.E."/>
            <person name="Yandava C."/>
            <person name="Young S."/>
            <person name="Zeng Q."/>
            <person name="Zucker J."/>
            <person name="Felipe M.S."/>
            <person name="Goldman G.H."/>
            <person name="Haas B.J."/>
            <person name="McEwen J.G."/>
            <person name="Nino-Vega G."/>
            <person name="Puccia R."/>
            <person name="San-Blas G."/>
            <person name="Soares C.M."/>
            <person name="Birren B.W."/>
            <person name="Cuomo C.A."/>
        </authorList>
    </citation>
    <scope>NUCLEOTIDE SEQUENCE [LARGE SCALE GENOMIC DNA]</scope>
    <source>
        <strain>Pb18</strain>
    </source>
</reference>
<proteinExistence type="inferred from homology"/>
<feature type="signal peptide" evidence="4">
    <location>
        <begin position="1"/>
        <end position="21"/>
    </location>
</feature>
<feature type="propeptide" id="PRO_0000453247" evidence="3">
    <location>
        <begin position="22"/>
        <end position="175"/>
    </location>
</feature>
<feature type="chain" id="PRO_0000411187" description="Inactive metallocarboxypeptidase ECM14">
    <location>
        <begin position="176"/>
        <end position="591"/>
    </location>
</feature>
<feature type="domain" description="Peptidase M14" evidence="5">
    <location>
        <begin position="203"/>
        <end position="523"/>
    </location>
</feature>
<feature type="region of interest" description="Disordered" evidence="6">
    <location>
        <begin position="533"/>
        <end position="591"/>
    </location>
</feature>
<feature type="compositionally biased region" description="Acidic residues" evidence="6">
    <location>
        <begin position="544"/>
        <end position="559"/>
    </location>
</feature>
<feature type="compositionally biased region" description="Acidic residues" evidence="6">
    <location>
        <begin position="573"/>
        <end position="582"/>
    </location>
</feature>
<feature type="binding site" evidence="1">
    <location>
        <begin position="265"/>
        <end position="268"/>
    </location>
    <ligand>
        <name>substrate</name>
    </ligand>
</feature>
<feature type="binding site" evidence="5">
    <location>
        <position position="265"/>
    </location>
    <ligand>
        <name>Zn(2+)</name>
        <dbReference type="ChEBI" id="CHEBI:29105"/>
        <note>catalytic</note>
    </ligand>
</feature>
<feature type="binding site" evidence="5">
    <location>
        <position position="268"/>
    </location>
    <ligand>
        <name>Zn(2+)</name>
        <dbReference type="ChEBI" id="CHEBI:29105"/>
        <note>catalytic</note>
    </ligand>
</feature>
<feature type="binding site" evidence="1">
    <location>
        <position position="323"/>
    </location>
    <ligand>
        <name>substrate</name>
    </ligand>
</feature>
<feature type="binding site" evidence="1">
    <location>
        <begin position="340"/>
        <end position="341"/>
    </location>
    <ligand>
        <name>substrate</name>
    </ligand>
</feature>
<feature type="binding site" evidence="5">
    <location>
        <position position="397"/>
    </location>
    <ligand>
        <name>Zn(2+)</name>
        <dbReference type="ChEBI" id="CHEBI:29105"/>
        <note>catalytic</note>
    </ligand>
</feature>
<feature type="binding site" evidence="1">
    <location>
        <begin position="398"/>
        <end position="399"/>
    </location>
    <ligand>
        <name>substrate</name>
    </ligand>
</feature>
<feature type="glycosylation site" description="N-linked (GlcNAc...) asparagine" evidence="4">
    <location>
        <position position="350"/>
    </location>
</feature>
<feature type="glycosylation site" description="N-linked (GlcNAc...) asparagine" evidence="4">
    <location>
        <position position="381"/>
    </location>
</feature>
<feature type="glycosylation site" description="N-linked (GlcNAc...) asparagine" evidence="4">
    <location>
        <position position="386"/>
    </location>
</feature>
<feature type="disulfide bond" evidence="2">
    <location>
        <begin position="334"/>
        <end position="357"/>
    </location>
</feature>
<sequence length="591" mass="67374">MRLFSHLAVLAILACAVPITAIPSFLSNSYPAHPAEGISLFPQTQPQAPLGLWTRLRNTVIERLWRVPPQLCKNRPGHKGKFPLFSAPASLRARYGDDVVLRFTIRNAEEVKALAEASNILFLDVWASTDEWVDIRLSKDVVPSLLGLLPKSLQTSHIPLIHDLPQTIYESYPSSSQRSSYDVQGFSPSTKHSSDKTNIFFQDYQPFSVIVPWMRLLTSMFSSHVQMINIGSTFEGRDIPALQIGVWPANNPKPRKTVVVSGGSHAREWISVSTVNYVAYSLITNYAKSKHVAELLQQFDFIFIPTLNPDGYIYTWEVDRIWRKNRQDTSLPFCPGVDLDRTWGFKWDGNITADNPCSESYPGEDPFAGIEAKQFSQWAKNQTAQNNTEFVAFIDLHSYSQQIRYPYSYSCQPDPPNLENLEELAIGIAKAIRLTNRETYEVSSACEGLMASQAKVKSDDPFPRIERTGGSALDWFYHDLNVKYSYQIKLRDRGSYGFLLPRENIVPTGQEMFNAVMVLGRFLSGHDGFGPLDWEDESQRPKADEDDIPSENELDENDDSWIPYDYRNHDDQNEGEGYDNDEWGFRRRRKR</sequence>
<dbReference type="EMBL" id="KN275962">
    <property type="protein sequence ID" value="EEH49236.1"/>
    <property type="molecule type" value="Genomic_DNA"/>
</dbReference>
<dbReference type="RefSeq" id="XP_010760957.1">
    <property type="nucleotide sequence ID" value="XM_010762655.1"/>
</dbReference>
<dbReference type="SMR" id="C1GDH9"/>
<dbReference type="FunCoup" id="C1GDH9">
    <property type="interactions" value="780"/>
</dbReference>
<dbReference type="STRING" id="502780.C1GDH9"/>
<dbReference type="GlyCosmos" id="C1GDH9">
    <property type="glycosylation" value="3 sites, No reported glycans"/>
</dbReference>
<dbReference type="GeneID" id="22584264"/>
<dbReference type="KEGG" id="pbn:PADG_05315"/>
<dbReference type="VEuPathDB" id="FungiDB:PADG_05315"/>
<dbReference type="eggNOG" id="KOG2650">
    <property type="taxonomic scope" value="Eukaryota"/>
</dbReference>
<dbReference type="HOGENOM" id="CLU_019326_1_0_1"/>
<dbReference type="InParanoid" id="C1GDH9"/>
<dbReference type="OMA" id="WFYHQLH"/>
<dbReference type="OrthoDB" id="3275at33183"/>
<dbReference type="Proteomes" id="UP000001628">
    <property type="component" value="Unassembled WGS sequence"/>
</dbReference>
<dbReference type="GO" id="GO:0005576">
    <property type="term" value="C:extracellular region"/>
    <property type="evidence" value="ECO:0007669"/>
    <property type="project" value="UniProtKB-SubCell"/>
</dbReference>
<dbReference type="GO" id="GO:0005773">
    <property type="term" value="C:vacuole"/>
    <property type="evidence" value="ECO:0007669"/>
    <property type="project" value="UniProtKB-SubCell"/>
</dbReference>
<dbReference type="GO" id="GO:0008270">
    <property type="term" value="F:zinc ion binding"/>
    <property type="evidence" value="ECO:0007669"/>
    <property type="project" value="InterPro"/>
</dbReference>
<dbReference type="GO" id="GO:0071555">
    <property type="term" value="P:cell wall organization"/>
    <property type="evidence" value="ECO:0007669"/>
    <property type="project" value="UniProtKB-KW"/>
</dbReference>
<dbReference type="GO" id="GO:0006508">
    <property type="term" value="P:proteolysis"/>
    <property type="evidence" value="ECO:0007669"/>
    <property type="project" value="InterPro"/>
</dbReference>
<dbReference type="CDD" id="cd03860">
    <property type="entry name" value="M14_CP_A-B_like"/>
    <property type="match status" value="1"/>
</dbReference>
<dbReference type="FunFam" id="3.40.630.10:FF:000060">
    <property type="entry name" value="Putative metallocarboxypeptidase ecm14"/>
    <property type="match status" value="1"/>
</dbReference>
<dbReference type="Gene3D" id="3.40.630.10">
    <property type="entry name" value="Zn peptidases"/>
    <property type="match status" value="1"/>
</dbReference>
<dbReference type="InterPro" id="IPR000834">
    <property type="entry name" value="Peptidase_M14"/>
</dbReference>
<dbReference type="PANTHER" id="PTHR11705:SF147">
    <property type="entry name" value="INACTIVE METALLOCARBOXYPEPTIDASE ECM14"/>
    <property type="match status" value="1"/>
</dbReference>
<dbReference type="PANTHER" id="PTHR11705">
    <property type="entry name" value="PROTEASE FAMILY M14 CARBOXYPEPTIDASE A,B"/>
    <property type="match status" value="1"/>
</dbReference>
<dbReference type="Pfam" id="PF00246">
    <property type="entry name" value="Peptidase_M14"/>
    <property type="match status" value="1"/>
</dbReference>
<dbReference type="PRINTS" id="PR00765">
    <property type="entry name" value="CRBOXYPTASEA"/>
</dbReference>
<dbReference type="SMART" id="SM00631">
    <property type="entry name" value="Zn_pept"/>
    <property type="match status" value="1"/>
</dbReference>
<dbReference type="SUPFAM" id="SSF54897">
    <property type="entry name" value="Protease propeptides/inhibitors"/>
    <property type="match status" value="1"/>
</dbReference>
<dbReference type="SUPFAM" id="SSF53187">
    <property type="entry name" value="Zn-dependent exopeptidases"/>
    <property type="match status" value="1"/>
</dbReference>
<dbReference type="PROSITE" id="PS00132">
    <property type="entry name" value="CARBOXYPEPT_ZN_1"/>
    <property type="match status" value="1"/>
</dbReference>
<dbReference type="PROSITE" id="PS52035">
    <property type="entry name" value="PEPTIDASE_M14"/>
    <property type="match status" value="1"/>
</dbReference>
<evidence type="ECO:0000250" key="1">
    <source>
        <dbReference type="UniProtKB" id="P00730"/>
    </source>
</evidence>
<evidence type="ECO:0000250" key="2">
    <source>
        <dbReference type="UniProtKB" id="P15085"/>
    </source>
</evidence>
<evidence type="ECO:0000250" key="3">
    <source>
        <dbReference type="UniProtKB" id="P38836"/>
    </source>
</evidence>
<evidence type="ECO:0000255" key="4"/>
<evidence type="ECO:0000255" key="5">
    <source>
        <dbReference type="PROSITE-ProRule" id="PRU01379"/>
    </source>
</evidence>
<evidence type="ECO:0000256" key="6">
    <source>
        <dbReference type="SAM" id="MobiDB-lite"/>
    </source>
</evidence>
<evidence type="ECO:0000305" key="7"/>
<accession>C1GDH9</accession>
<keyword id="KW-0961">Cell wall biogenesis/degradation</keyword>
<keyword id="KW-1015">Disulfide bond</keyword>
<keyword id="KW-0325">Glycoprotein</keyword>
<keyword id="KW-0479">Metal-binding</keyword>
<keyword id="KW-1185">Reference proteome</keyword>
<keyword id="KW-0964">Secreted</keyword>
<keyword id="KW-0732">Signal</keyword>
<keyword id="KW-0926">Vacuole</keyword>
<keyword id="KW-0862">Zinc</keyword>
<comment type="function">
    <text evidence="3">Inactive carboxypeptidase that may play a role in cell wall organization and biogenesis.</text>
</comment>
<comment type="cofactor">
    <cofactor evidence="1">
        <name>Zn(2+)</name>
        <dbReference type="ChEBI" id="CHEBI:29105"/>
    </cofactor>
    <text evidence="1">Binds 1 zinc ion per subunit.</text>
</comment>
<comment type="subcellular location">
    <subcellularLocation>
        <location evidence="3">Vacuole</location>
    </subcellularLocation>
    <subcellularLocation>
        <location evidence="3">Secreted</location>
    </subcellularLocation>
</comment>
<comment type="similarity">
    <text evidence="7">Belongs to the peptidase M14 family.</text>
</comment>
<comment type="caution">
    <text evidence="3">Lacks the conserved Glu residue in position 489 essential for carbopeptidase activity. The mature form lacks catalytic activity towards synthetic peptide substrates.</text>
</comment>
<name>ECM14_PARBD</name>
<organism>
    <name type="scientific">Paracoccidioides brasiliensis (strain Pb18)</name>
    <dbReference type="NCBI Taxonomy" id="502780"/>
    <lineage>
        <taxon>Eukaryota</taxon>
        <taxon>Fungi</taxon>
        <taxon>Dikarya</taxon>
        <taxon>Ascomycota</taxon>
        <taxon>Pezizomycotina</taxon>
        <taxon>Eurotiomycetes</taxon>
        <taxon>Eurotiomycetidae</taxon>
        <taxon>Onygenales</taxon>
        <taxon>Ajellomycetaceae</taxon>
        <taxon>Paracoccidioides</taxon>
    </lineage>
</organism>
<protein>
    <recommendedName>
        <fullName evidence="7">Inactive metallocarboxypeptidase ECM14</fullName>
    </recommendedName>
</protein>